<dbReference type="EMBL" id="CP000468">
    <property type="protein sequence ID" value="ABJ02793.1"/>
    <property type="molecule type" value="Genomic_DNA"/>
</dbReference>
<dbReference type="RefSeq" id="WP_000447529.1">
    <property type="nucleotide sequence ID" value="NZ_CADILS010000044.1"/>
</dbReference>
<dbReference type="SMR" id="A1AGK3"/>
<dbReference type="GeneID" id="93778672"/>
<dbReference type="KEGG" id="ecv:APECO1_3135"/>
<dbReference type="HOGENOM" id="CLU_083987_3_3_6"/>
<dbReference type="Proteomes" id="UP000008216">
    <property type="component" value="Chromosome"/>
</dbReference>
<dbReference type="GO" id="GO:0022625">
    <property type="term" value="C:cytosolic large ribosomal subunit"/>
    <property type="evidence" value="ECO:0007669"/>
    <property type="project" value="TreeGrafter"/>
</dbReference>
<dbReference type="GO" id="GO:0019843">
    <property type="term" value="F:rRNA binding"/>
    <property type="evidence" value="ECO:0007669"/>
    <property type="project" value="UniProtKB-UniRule"/>
</dbReference>
<dbReference type="GO" id="GO:0003735">
    <property type="term" value="F:structural constituent of ribosome"/>
    <property type="evidence" value="ECO:0007669"/>
    <property type="project" value="InterPro"/>
</dbReference>
<dbReference type="GO" id="GO:0006412">
    <property type="term" value="P:translation"/>
    <property type="evidence" value="ECO:0007669"/>
    <property type="project" value="UniProtKB-UniRule"/>
</dbReference>
<dbReference type="CDD" id="cd00336">
    <property type="entry name" value="Ribosomal_L22"/>
    <property type="match status" value="1"/>
</dbReference>
<dbReference type="FunFam" id="3.90.470.10:FF:000001">
    <property type="entry name" value="50S ribosomal protein L22"/>
    <property type="match status" value="1"/>
</dbReference>
<dbReference type="Gene3D" id="3.90.470.10">
    <property type="entry name" value="Ribosomal protein L22/L17"/>
    <property type="match status" value="1"/>
</dbReference>
<dbReference type="HAMAP" id="MF_01331_B">
    <property type="entry name" value="Ribosomal_uL22_B"/>
    <property type="match status" value="1"/>
</dbReference>
<dbReference type="InterPro" id="IPR001063">
    <property type="entry name" value="Ribosomal_uL22"/>
</dbReference>
<dbReference type="InterPro" id="IPR005727">
    <property type="entry name" value="Ribosomal_uL22_bac/chlpt-type"/>
</dbReference>
<dbReference type="InterPro" id="IPR047867">
    <property type="entry name" value="Ribosomal_uL22_bac/org-type"/>
</dbReference>
<dbReference type="InterPro" id="IPR018260">
    <property type="entry name" value="Ribosomal_uL22_CS"/>
</dbReference>
<dbReference type="InterPro" id="IPR036394">
    <property type="entry name" value="Ribosomal_uL22_sf"/>
</dbReference>
<dbReference type="NCBIfam" id="TIGR01044">
    <property type="entry name" value="rplV_bact"/>
    <property type="match status" value="1"/>
</dbReference>
<dbReference type="PANTHER" id="PTHR13501">
    <property type="entry name" value="CHLOROPLAST 50S RIBOSOMAL PROTEIN L22-RELATED"/>
    <property type="match status" value="1"/>
</dbReference>
<dbReference type="PANTHER" id="PTHR13501:SF8">
    <property type="entry name" value="LARGE RIBOSOMAL SUBUNIT PROTEIN UL22M"/>
    <property type="match status" value="1"/>
</dbReference>
<dbReference type="Pfam" id="PF00237">
    <property type="entry name" value="Ribosomal_L22"/>
    <property type="match status" value="1"/>
</dbReference>
<dbReference type="SUPFAM" id="SSF54843">
    <property type="entry name" value="Ribosomal protein L22"/>
    <property type="match status" value="1"/>
</dbReference>
<dbReference type="PROSITE" id="PS00464">
    <property type="entry name" value="RIBOSOMAL_L22"/>
    <property type="match status" value="1"/>
</dbReference>
<protein>
    <recommendedName>
        <fullName evidence="1">Large ribosomal subunit protein uL22</fullName>
    </recommendedName>
    <alternativeName>
        <fullName evidence="2">50S ribosomal protein L22</fullName>
    </alternativeName>
</protein>
<gene>
    <name evidence="1" type="primary">rplV</name>
    <name type="ordered locus">Ecok1_32990</name>
    <name type="ORF">APECO1_3135</name>
</gene>
<reference key="1">
    <citation type="journal article" date="2007" name="J. Bacteriol.">
        <title>The genome sequence of avian pathogenic Escherichia coli strain O1:K1:H7 shares strong similarities with human extraintestinal pathogenic E. coli genomes.</title>
        <authorList>
            <person name="Johnson T.J."/>
            <person name="Kariyawasam S."/>
            <person name="Wannemuehler Y."/>
            <person name="Mangiamele P."/>
            <person name="Johnson S.J."/>
            <person name="Doetkott C."/>
            <person name="Skyberg J.A."/>
            <person name="Lynne A.M."/>
            <person name="Johnson J.R."/>
            <person name="Nolan L.K."/>
        </authorList>
    </citation>
    <scope>NUCLEOTIDE SEQUENCE [LARGE SCALE GENOMIC DNA]</scope>
</reference>
<keyword id="KW-1185">Reference proteome</keyword>
<keyword id="KW-0687">Ribonucleoprotein</keyword>
<keyword id="KW-0689">Ribosomal protein</keyword>
<keyword id="KW-0694">RNA-binding</keyword>
<keyword id="KW-0699">rRNA-binding</keyword>
<name>RL22_ECOK1</name>
<proteinExistence type="inferred from homology"/>
<organism>
    <name type="scientific">Escherichia coli O1:K1 / APEC</name>
    <dbReference type="NCBI Taxonomy" id="405955"/>
    <lineage>
        <taxon>Bacteria</taxon>
        <taxon>Pseudomonadati</taxon>
        <taxon>Pseudomonadota</taxon>
        <taxon>Gammaproteobacteria</taxon>
        <taxon>Enterobacterales</taxon>
        <taxon>Enterobacteriaceae</taxon>
        <taxon>Escherichia</taxon>
    </lineage>
</organism>
<feature type="chain" id="PRO_1000052568" description="Large ribosomal subunit protein uL22">
    <location>
        <begin position="1"/>
        <end position="110"/>
    </location>
</feature>
<evidence type="ECO:0000255" key="1">
    <source>
        <dbReference type="HAMAP-Rule" id="MF_01331"/>
    </source>
</evidence>
<evidence type="ECO:0000305" key="2"/>
<comment type="function">
    <text evidence="1">This protein binds specifically to 23S rRNA; its binding is stimulated by other ribosomal proteins, e.g. L4, L17, and L20. It is important during the early stages of 50S assembly. It makes multiple contacts with different domains of the 23S rRNA in the assembled 50S subunit and ribosome (By similarity).</text>
</comment>
<comment type="function">
    <text evidence="1">The globular domain of the protein is located near the polypeptide exit tunnel on the outside of the subunit, while an extended beta-hairpin is found that lines the wall of the exit tunnel in the center of the 70S ribosome.</text>
</comment>
<comment type="subunit">
    <text evidence="1">Part of the 50S ribosomal subunit.</text>
</comment>
<comment type="similarity">
    <text evidence="1">Belongs to the universal ribosomal protein uL22 family.</text>
</comment>
<accession>A1AGK3</accession>
<sequence>METIAKHRHARSSAQKVRLVADLIRGKKVSQALDILTYTNKKAAVLVKKVLESAIANAEHNDGADIDDLKVTKIFVDEGPSMKRIMPRAKGRADRILKRTSHITVVVSDR</sequence>